<accession>O80476</accession>
<accession>Q8LCI0</accession>
<sequence>MSEEKRKQHFVLVHGACHGAWCWYKVKPLLEALGHRVTALDLAASGIDTTRSITDISTCEQYSEPLMQLMTSLPNDEKVVLVGHSFGGLSLALAMDKFPDKISVSVFVTAFMPDTKHSPSFVEEKFASSMTPEGWMGSELETYGSDNSGLSVFFSTDFMKHRLYQLSPVEDLELGLLLKRPSSLFINELSKMENFSEKGYGSVPRAYIVCKEDNIISEDHQRWMIHNYPANLVIEMEETDHMPMFCKPQLLSDHLLAIADNFC</sequence>
<feature type="chain" id="PRO_0000418177" description="Methylesterase 2">
    <location>
        <begin position="1"/>
        <end position="263"/>
    </location>
</feature>
<feature type="active site" description="Acyl-ester intermediate" evidence="1">
    <location>
        <position position="85"/>
    </location>
</feature>
<feature type="active site" description="Charge relay system" evidence="1">
    <location>
        <position position="213"/>
    </location>
</feature>
<feature type="active site" description="Charge relay system" evidence="1">
    <location>
        <position position="241"/>
    </location>
</feature>
<feature type="sequence conflict" description="In Ref. 5; AAM63650." evidence="6" ref="5">
    <original>L</original>
    <variation>V</variation>
    <location>
        <position position="250"/>
    </location>
</feature>
<feature type="sequence conflict" description="In Ref. 5; AAM63650." evidence="6" ref="5">
    <original>C</original>
    <variation>S</variation>
    <location>
        <position position="263"/>
    </location>
</feature>
<evidence type="ECO:0000250" key="1">
    <source>
        <dbReference type="UniProtKB" id="Q6RYA0"/>
    </source>
</evidence>
<evidence type="ECO:0000269" key="2">
    <source>
    </source>
</evidence>
<evidence type="ECO:0000269" key="3">
    <source>
    </source>
</evidence>
<evidence type="ECO:0000269" key="4">
    <source>
    </source>
</evidence>
<evidence type="ECO:0000303" key="5">
    <source>
    </source>
</evidence>
<evidence type="ECO:0000305" key="6"/>
<evidence type="ECO:0000312" key="7">
    <source>
        <dbReference type="Araport" id="AT2G23600"/>
    </source>
</evidence>
<evidence type="ECO:0000312" key="8">
    <source>
        <dbReference type="EMBL" id="AAC23773.1"/>
    </source>
</evidence>
<protein>
    <recommendedName>
        <fullName evidence="5">Methylesterase 2</fullName>
        <shortName evidence="5">AtMES2</shortName>
        <ecNumber evidence="2">3.1.1.-</ecNumber>
    </recommendedName>
    <alternativeName>
        <fullName>Protein METHYLESTERASE 8</fullName>
        <shortName>AtME8</shortName>
    </alternativeName>
</protein>
<dbReference type="EC" id="3.1.1.-" evidence="2"/>
<dbReference type="EMBL" id="AC003040">
    <property type="protein sequence ID" value="AAC23773.1"/>
    <property type="molecule type" value="Genomic_DNA"/>
</dbReference>
<dbReference type="EMBL" id="CP002685">
    <property type="protein sequence ID" value="AEC07471.1"/>
    <property type="molecule type" value="Genomic_DNA"/>
</dbReference>
<dbReference type="EMBL" id="AF361627">
    <property type="protein sequence ID" value="AAK32795.1"/>
    <property type="molecule type" value="mRNA"/>
</dbReference>
<dbReference type="EMBL" id="AY056068">
    <property type="protein sequence ID" value="AAL06968.1"/>
    <property type="molecule type" value="mRNA"/>
</dbReference>
<dbReference type="EMBL" id="AK226527">
    <property type="protein sequence ID" value="BAE98666.1"/>
    <property type="molecule type" value="mRNA"/>
</dbReference>
<dbReference type="EMBL" id="AY086590">
    <property type="protein sequence ID" value="AAM63650.1"/>
    <property type="molecule type" value="mRNA"/>
</dbReference>
<dbReference type="PIR" id="T01149">
    <property type="entry name" value="T01149"/>
</dbReference>
<dbReference type="RefSeq" id="NP_179941.1">
    <property type="nucleotide sequence ID" value="NM_127924.3"/>
</dbReference>
<dbReference type="SMR" id="O80476"/>
<dbReference type="BioGRID" id="2244">
    <property type="interactions" value="1"/>
</dbReference>
<dbReference type="FunCoup" id="O80476">
    <property type="interactions" value="92"/>
</dbReference>
<dbReference type="IntAct" id="O80476">
    <property type="interactions" value="1"/>
</dbReference>
<dbReference type="STRING" id="3702.O80476"/>
<dbReference type="ESTHER" id="arath-MES2">
    <property type="family name" value="Hydroxynitrile_lyase"/>
</dbReference>
<dbReference type="MetOSite" id="O80476"/>
<dbReference type="PaxDb" id="3702-AT2G23600.1"/>
<dbReference type="EnsemblPlants" id="AT2G23600.1">
    <property type="protein sequence ID" value="AT2G23600.1"/>
    <property type="gene ID" value="AT2G23600"/>
</dbReference>
<dbReference type="GeneID" id="816892"/>
<dbReference type="Gramene" id="AT2G23600.1">
    <property type="protein sequence ID" value="AT2G23600.1"/>
    <property type="gene ID" value="AT2G23600"/>
</dbReference>
<dbReference type="KEGG" id="ath:AT2G23600"/>
<dbReference type="Araport" id="AT2G23600"/>
<dbReference type="TAIR" id="AT2G23600">
    <property type="gene designation" value="ACL"/>
</dbReference>
<dbReference type="eggNOG" id="ENOG502QR2J">
    <property type="taxonomic scope" value="Eukaryota"/>
</dbReference>
<dbReference type="HOGENOM" id="CLU_046066_0_1_1"/>
<dbReference type="InParanoid" id="O80476"/>
<dbReference type="PhylomeDB" id="O80476"/>
<dbReference type="BioCyc" id="ARA:AT2G23600-MONOMER"/>
<dbReference type="UniPathway" id="UPA00382"/>
<dbReference type="PRO" id="PR:O80476"/>
<dbReference type="Proteomes" id="UP000006548">
    <property type="component" value="Chromosome 2"/>
</dbReference>
<dbReference type="ExpressionAtlas" id="O80476">
    <property type="expression patterns" value="baseline and differential"/>
</dbReference>
<dbReference type="GO" id="GO:0005829">
    <property type="term" value="C:cytosol"/>
    <property type="evidence" value="ECO:0007005"/>
    <property type="project" value="TAIR"/>
</dbReference>
<dbReference type="GO" id="GO:0005773">
    <property type="term" value="C:vacuole"/>
    <property type="evidence" value="ECO:0007005"/>
    <property type="project" value="TAIR"/>
</dbReference>
<dbReference type="GO" id="GO:0052689">
    <property type="term" value="F:carboxylic ester hydrolase activity"/>
    <property type="evidence" value="ECO:0000315"/>
    <property type="project" value="TAIR"/>
</dbReference>
<dbReference type="GO" id="GO:0016788">
    <property type="term" value="F:hydrolase activity, acting on ester bonds"/>
    <property type="evidence" value="ECO:0000314"/>
    <property type="project" value="TAIR"/>
</dbReference>
<dbReference type="GO" id="GO:0080030">
    <property type="term" value="F:methyl indole-3-acetate esterase activity"/>
    <property type="evidence" value="ECO:0000314"/>
    <property type="project" value="TAIR"/>
</dbReference>
<dbReference type="GO" id="GO:0080032">
    <property type="term" value="F:methyl jasmonate esterase activity"/>
    <property type="evidence" value="ECO:0000314"/>
    <property type="project" value="TAIR"/>
</dbReference>
<dbReference type="GO" id="GO:0080031">
    <property type="term" value="F:methyl salicylate esterase activity"/>
    <property type="evidence" value="ECO:0000314"/>
    <property type="project" value="TAIR"/>
</dbReference>
<dbReference type="GO" id="GO:1901847">
    <property type="term" value="P:nicotinate metabolic process"/>
    <property type="evidence" value="ECO:0000315"/>
    <property type="project" value="TAIR"/>
</dbReference>
<dbReference type="GO" id="GO:0031408">
    <property type="term" value="P:oxylipin biosynthetic process"/>
    <property type="evidence" value="ECO:0007669"/>
    <property type="project" value="UniProtKB-UniPathway"/>
</dbReference>
<dbReference type="GO" id="GO:0009696">
    <property type="term" value="P:salicylic acid metabolic process"/>
    <property type="evidence" value="ECO:0000315"/>
    <property type="project" value="TAIR"/>
</dbReference>
<dbReference type="FunFam" id="3.40.50.1820:FF:000051">
    <property type="entry name" value="(S)-hydroxynitrile lyase"/>
    <property type="match status" value="1"/>
</dbReference>
<dbReference type="Gene3D" id="3.40.50.1820">
    <property type="entry name" value="alpha/beta hydrolase"/>
    <property type="match status" value="1"/>
</dbReference>
<dbReference type="InterPro" id="IPR000073">
    <property type="entry name" value="AB_hydrolase_1"/>
</dbReference>
<dbReference type="InterPro" id="IPR029058">
    <property type="entry name" value="AB_hydrolase_fold"/>
</dbReference>
<dbReference type="InterPro" id="IPR045889">
    <property type="entry name" value="MES/HNL"/>
</dbReference>
<dbReference type="PANTHER" id="PTHR10992:SF1081">
    <property type="entry name" value="METHYLESTERASE 2-RELATED"/>
    <property type="match status" value="1"/>
</dbReference>
<dbReference type="PANTHER" id="PTHR10992">
    <property type="entry name" value="METHYLESTERASE FAMILY MEMBER"/>
    <property type="match status" value="1"/>
</dbReference>
<dbReference type="Pfam" id="PF12697">
    <property type="entry name" value="Abhydrolase_6"/>
    <property type="match status" value="1"/>
</dbReference>
<dbReference type="SUPFAM" id="SSF53474">
    <property type="entry name" value="alpha/beta-Hydrolases"/>
    <property type="match status" value="1"/>
</dbReference>
<dbReference type="PROSITE" id="PS00120">
    <property type="entry name" value="LIPASE_SER"/>
    <property type="match status" value="1"/>
</dbReference>
<keyword id="KW-0378">Hydrolase</keyword>
<keyword id="KW-1185">Reference proteome</keyword>
<proteinExistence type="evidence at protein level"/>
<reference key="1">
    <citation type="journal article" date="1999" name="Nature">
        <title>Sequence and analysis of chromosome 2 of the plant Arabidopsis thaliana.</title>
        <authorList>
            <person name="Lin X."/>
            <person name="Kaul S."/>
            <person name="Rounsley S.D."/>
            <person name="Shea T.P."/>
            <person name="Benito M.-I."/>
            <person name="Town C.D."/>
            <person name="Fujii C.Y."/>
            <person name="Mason T.M."/>
            <person name="Bowman C.L."/>
            <person name="Barnstead M.E."/>
            <person name="Feldblyum T.V."/>
            <person name="Buell C.R."/>
            <person name="Ketchum K.A."/>
            <person name="Lee J.J."/>
            <person name="Ronning C.M."/>
            <person name="Koo H.L."/>
            <person name="Moffat K.S."/>
            <person name="Cronin L.A."/>
            <person name="Shen M."/>
            <person name="Pai G."/>
            <person name="Van Aken S."/>
            <person name="Umayam L."/>
            <person name="Tallon L.J."/>
            <person name="Gill J.E."/>
            <person name="Adams M.D."/>
            <person name="Carrera A.J."/>
            <person name="Creasy T.H."/>
            <person name="Goodman H.M."/>
            <person name="Somerville C.R."/>
            <person name="Copenhaver G.P."/>
            <person name="Preuss D."/>
            <person name="Nierman W.C."/>
            <person name="White O."/>
            <person name="Eisen J.A."/>
            <person name="Salzberg S.L."/>
            <person name="Fraser C.M."/>
            <person name="Venter J.C."/>
        </authorList>
    </citation>
    <scope>NUCLEOTIDE SEQUENCE [LARGE SCALE GENOMIC DNA]</scope>
    <source>
        <strain>cv. Columbia</strain>
    </source>
</reference>
<reference key="2">
    <citation type="journal article" date="2017" name="Plant J.">
        <title>Araport11: a complete reannotation of the Arabidopsis thaliana reference genome.</title>
        <authorList>
            <person name="Cheng C.Y."/>
            <person name="Krishnakumar V."/>
            <person name="Chan A.P."/>
            <person name="Thibaud-Nissen F."/>
            <person name="Schobel S."/>
            <person name="Town C.D."/>
        </authorList>
    </citation>
    <scope>GENOME REANNOTATION</scope>
    <source>
        <strain>cv. Columbia</strain>
    </source>
</reference>
<reference key="3">
    <citation type="journal article" date="2003" name="Science">
        <title>Empirical analysis of transcriptional activity in the Arabidopsis genome.</title>
        <authorList>
            <person name="Yamada K."/>
            <person name="Lim J."/>
            <person name="Dale J.M."/>
            <person name="Chen H."/>
            <person name="Shinn P."/>
            <person name="Palm C.J."/>
            <person name="Southwick A.M."/>
            <person name="Wu H.C."/>
            <person name="Kim C.J."/>
            <person name="Nguyen M."/>
            <person name="Pham P.K."/>
            <person name="Cheuk R.F."/>
            <person name="Karlin-Newmann G."/>
            <person name="Liu S.X."/>
            <person name="Lam B."/>
            <person name="Sakano H."/>
            <person name="Wu T."/>
            <person name="Yu G."/>
            <person name="Miranda M."/>
            <person name="Quach H.L."/>
            <person name="Tripp M."/>
            <person name="Chang C.H."/>
            <person name="Lee J.M."/>
            <person name="Toriumi M.J."/>
            <person name="Chan M.M."/>
            <person name="Tang C.C."/>
            <person name="Onodera C.S."/>
            <person name="Deng J.M."/>
            <person name="Akiyama K."/>
            <person name="Ansari Y."/>
            <person name="Arakawa T."/>
            <person name="Banh J."/>
            <person name="Banno F."/>
            <person name="Bowser L."/>
            <person name="Brooks S.Y."/>
            <person name="Carninci P."/>
            <person name="Chao Q."/>
            <person name="Choy N."/>
            <person name="Enju A."/>
            <person name="Goldsmith A.D."/>
            <person name="Gurjal M."/>
            <person name="Hansen N.F."/>
            <person name="Hayashizaki Y."/>
            <person name="Johnson-Hopson C."/>
            <person name="Hsuan V.W."/>
            <person name="Iida K."/>
            <person name="Karnes M."/>
            <person name="Khan S."/>
            <person name="Koesema E."/>
            <person name="Ishida J."/>
            <person name="Jiang P.X."/>
            <person name="Jones T."/>
            <person name="Kawai J."/>
            <person name="Kamiya A."/>
            <person name="Meyers C."/>
            <person name="Nakajima M."/>
            <person name="Narusaka M."/>
            <person name="Seki M."/>
            <person name="Sakurai T."/>
            <person name="Satou M."/>
            <person name="Tamse R."/>
            <person name="Vaysberg M."/>
            <person name="Wallender E.K."/>
            <person name="Wong C."/>
            <person name="Yamamura Y."/>
            <person name="Yuan S."/>
            <person name="Shinozaki K."/>
            <person name="Davis R.W."/>
            <person name="Theologis A."/>
            <person name="Ecker J.R."/>
        </authorList>
    </citation>
    <scope>NUCLEOTIDE SEQUENCE [LARGE SCALE MRNA]</scope>
    <source>
        <strain>cv. Columbia</strain>
    </source>
</reference>
<reference key="4">
    <citation type="submission" date="2006-07" db="EMBL/GenBank/DDBJ databases">
        <title>Large-scale analysis of RIKEN Arabidopsis full-length (RAFL) cDNAs.</title>
        <authorList>
            <person name="Totoki Y."/>
            <person name="Seki M."/>
            <person name="Ishida J."/>
            <person name="Nakajima M."/>
            <person name="Enju A."/>
            <person name="Kamiya A."/>
            <person name="Narusaka M."/>
            <person name="Shin-i T."/>
            <person name="Nakagawa M."/>
            <person name="Sakamoto N."/>
            <person name="Oishi K."/>
            <person name="Kohara Y."/>
            <person name="Kobayashi M."/>
            <person name="Toyoda A."/>
            <person name="Sakaki Y."/>
            <person name="Sakurai T."/>
            <person name="Iida K."/>
            <person name="Akiyama K."/>
            <person name="Satou M."/>
            <person name="Toyoda T."/>
            <person name="Konagaya A."/>
            <person name="Carninci P."/>
            <person name="Kawai J."/>
            <person name="Hayashizaki Y."/>
            <person name="Shinozaki K."/>
        </authorList>
    </citation>
    <scope>NUCLEOTIDE SEQUENCE [LARGE SCALE MRNA]</scope>
    <source>
        <strain>cv. Columbia</strain>
    </source>
</reference>
<reference key="5">
    <citation type="submission" date="2002-03" db="EMBL/GenBank/DDBJ databases">
        <title>Full-length cDNA from Arabidopsis thaliana.</title>
        <authorList>
            <person name="Brover V.V."/>
            <person name="Troukhan M.E."/>
            <person name="Alexandrov N.A."/>
            <person name="Lu Y.-P."/>
            <person name="Flavell R.B."/>
            <person name="Feldmann K.A."/>
        </authorList>
    </citation>
    <scope>NUCLEOTIDE SEQUENCE [LARGE SCALE MRNA]</scope>
</reference>
<reference key="6">
    <citation type="journal article" date="2008" name="Plant J.">
        <title>Identification of likely orthologs of tobacco salicylic acid-binding protein 2 and their role in systemic acquired resistance in Arabidopsis thaliana.</title>
        <authorList>
            <person name="Vlot A.C."/>
            <person name="Liu P.P."/>
            <person name="Cameron R.K."/>
            <person name="Park S.W."/>
            <person name="Yang Y."/>
            <person name="Kumar D."/>
            <person name="Zhou F."/>
            <person name="Padukkavidana T."/>
            <person name="Gustafsson C."/>
            <person name="Pichersky E."/>
            <person name="Klessig D.F."/>
        </authorList>
    </citation>
    <scope>FUNCTION</scope>
    <scope>ACTIVITY REGULATION</scope>
    <scope>BIOPHYSICOCHEMICAL PROPERTIES</scope>
</reference>
<reference key="7">
    <citation type="journal article" date="2008" name="Plant Physiol.">
        <title>Inactive methyl indole-3-acetic acid ester can be hydrolyzed and activated by several esterases belonging to the AtMES esterase family of Arabidopsis.</title>
        <authorList>
            <person name="Yang Y."/>
            <person name="Xu R."/>
            <person name="Ma C.J."/>
            <person name="Vlot A.C."/>
            <person name="Klessig D.F."/>
            <person name="Pichersky E."/>
        </authorList>
    </citation>
    <scope>GENE FAMILY</scope>
    <scope>FUNCTION</scope>
    <scope>CATALYTIC ACTIVITY</scope>
    <scope>PATHWAY</scope>
</reference>
<reference key="8">
    <citation type="journal article" date="2012" name="Bioorg. Med. Chem.">
        <title>Selective inhibition of plant serine hydrolases by agrochemicals revealed by competitive ABPP.</title>
        <authorList>
            <person name="Kaschani F."/>
            <person name="Nickel S."/>
            <person name="Pandey B."/>
            <person name="Cravatt B.F."/>
            <person name="Kaiser M."/>
            <person name="van der Hoorn R.A."/>
        </authorList>
    </citation>
    <scope>ACTIVITY REGULATION</scope>
</reference>
<gene>
    <name evidence="5" type="primary">MES2</name>
    <name type="synonym">ACL</name>
    <name type="synonym">ME8</name>
    <name evidence="7" type="ordered locus">At2g23600</name>
    <name evidence="8" type="ORF">F26B6.25</name>
</gene>
<name>MES2_ARATH</name>
<comment type="function">
    <text evidence="2 3">Methylesterase shown to have carboxylesterase activity, methyl indole-3-acetic acid (MeIAA) esterase activity, methyl salicylate (MeSA) esterase activity and methyl jasmonate (MeJA) esterase activity in vitro.</text>
</comment>
<comment type="catalytic activity">
    <reaction evidence="2">
        <text>methyl (indol-3-yl)acetate + H2O = (indol-3-yl)acetate + methanol + H(+)</text>
        <dbReference type="Rhea" id="RHEA:32919"/>
        <dbReference type="ChEBI" id="CHEBI:15377"/>
        <dbReference type="ChEBI" id="CHEBI:15378"/>
        <dbReference type="ChEBI" id="CHEBI:17790"/>
        <dbReference type="ChEBI" id="CHEBI:30854"/>
        <dbReference type="ChEBI" id="CHEBI:72782"/>
    </reaction>
    <physiologicalReaction direction="left-to-right" evidence="2">
        <dbReference type="Rhea" id="RHEA:32920"/>
    </physiologicalReaction>
</comment>
<comment type="catalytic activity">
    <reaction evidence="2">
        <text>methyl (-)-jasmonate + H2O = jasmonate + methanol + H(+)</text>
        <dbReference type="Rhea" id="RHEA:55372"/>
        <dbReference type="ChEBI" id="CHEBI:15377"/>
        <dbReference type="ChEBI" id="CHEBI:15378"/>
        <dbReference type="ChEBI" id="CHEBI:15929"/>
        <dbReference type="ChEBI" id="CHEBI:17790"/>
        <dbReference type="ChEBI" id="CHEBI:58431"/>
    </reaction>
    <physiologicalReaction direction="left-to-right" evidence="2">
        <dbReference type="Rhea" id="RHEA:55373"/>
    </physiologicalReaction>
</comment>
<comment type="catalytic activity">
    <reaction evidence="2">
        <text>methyl salicylate + H2O = salicylate + methanol + H(+)</text>
        <dbReference type="Rhea" id="RHEA:33611"/>
        <dbReference type="ChEBI" id="CHEBI:15377"/>
        <dbReference type="ChEBI" id="CHEBI:15378"/>
        <dbReference type="ChEBI" id="CHEBI:17790"/>
        <dbReference type="ChEBI" id="CHEBI:30762"/>
        <dbReference type="ChEBI" id="CHEBI:31832"/>
    </reaction>
    <physiologicalReaction direction="left-to-right" evidence="2">
        <dbReference type="Rhea" id="RHEA:33612"/>
    </physiologicalReaction>
</comment>
<comment type="activity regulation">
    <text evidence="3 4">Esterase activity is down-regulated by salicylic acid (SA). Down-regulated by agrochemicals Paraoxon, 3,4-DCl and Profenofos.</text>
</comment>
<comment type="biophysicochemical properties">
    <kinetics>
        <Vmax evidence="3">1.77 nmol/min/ug enzyme with methyl salicylate (MeSA) as substrate</Vmax>
    </kinetics>
</comment>
<comment type="pathway">
    <text evidence="2">Plant hormone biosynthesis.</text>
</comment>
<comment type="pathway">
    <text evidence="2">Lipid metabolism; oxylipin biosynthesis.</text>
</comment>
<comment type="similarity">
    <text evidence="6">Belongs to the AB hydrolase superfamily. Methylesterase family.</text>
</comment>
<organism>
    <name type="scientific">Arabidopsis thaliana</name>
    <name type="common">Mouse-ear cress</name>
    <dbReference type="NCBI Taxonomy" id="3702"/>
    <lineage>
        <taxon>Eukaryota</taxon>
        <taxon>Viridiplantae</taxon>
        <taxon>Streptophyta</taxon>
        <taxon>Embryophyta</taxon>
        <taxon>Tracheophyta</taxon>
        <taxon>Spermatophyta</taxon>
        <taxon>Magnoliopsida</taxon>
        <taxon>eudicotyledons</taxon>
        <taxon>Gunneridae</taxon>
        <taxon>Pentapetalae</taxon>
        <taxon>rosids</taxon>
        <taxon>malvids</taxon>
        <taxon>Brassicales</taxon>
        <taxon>Brassicaceae</taxon>
        <taxon>Camelineae</taxon>
        <taxon>Arabidopsis</taxon>
    </lineage>
</organism>